<gene>
    <name evidence="1" type="primary">hisA</name>
    <name type="ordered locus">BHWA1_02263</name>
</gene>
<sequence length="238" mass="26749">MYILPAIDLKNGEVVRLVEGNYDNKTTYFKDPLEVLDFFIESGSSYLHVVDLDGASDGETINFKTIEKVIKKCDLFVEVGGGIRNEDTIKKYLDIGVKRTILGTAAVENIDFTNNMINKYKEHIAVSIDSRDRMIAVKGWKEINKQDSVEFCMKLDSMGIDTIIYTDISKDGKLSGTNLDIYKELREKISCNIIASGGVTFEDEIIKLRDMKINGAIVGKAIYEGKIDLKKIIEIAKQ</sequence>
<accession>C0QWR6</accession>
<evidence type="ECO:0000255" key="1">
    <source>
        <dbReference type="HAMAP-Rule" id="MF_01014"/>
    </source>
</evidence>
<dbReference type="EC" id="5.3.1.16" evidence="1"/>
<dbReference type="EMBL" id="CP001357">
    <property type="protein sequence ID" value="ACN84719.1"/>
    <property type="molecule type" value="Genomic_DNA"/>
</dbReference>
<dbReference type="RefSeq" id="WP_012671751.1">
    <property type="nucleotide sequence ID" value="NC_012225.1"/>
</dbReference>
<dbReference type="SMR" id="C0QWR6"/>
<dbReference type="STRING" id="565034.BHWA1_02263"/>
<dbReference type="KEGG" id="bhy:BHWA1_02263"/>
<dbReference type="eggNOG" id="COG0106">
    <property type="taxonomic scope" value="Bacteria"/>
</dbReference>
<dbReference type="HOGENOM" id="CLU_048577_1_2_12"/>
<dbReference type="UniPathway" id="UPA00031">
    <property type="reaction ID" value="UER00009"/>
</dbReference>
<dbReference type="Proteomes" id="UP000001803">
    <property type="component" value="Chromosome"/>
</dbReference>
<dbReference type="GO" id="GO:0005737">
    <property type="term" value="C:cytoplasm"/>
    <property type="evidence" value="ECO:0007669"/>
    <property type="project" value="UniProtKB-SubCell"/>
</dbReference>
<dbReference type="GO" id="GO:0003949">
    <property type="term" value="F:1-(5-phosphoribosyl)-5-[(5-phosphoribosylamino)methylideneamino]imidazole-4-carboxamide isomerase activity"/>
    <property type="evidence" value="ECO:0007669"/>
    <property type="project" value="UniProtKB-UniRule"/>
</dbReference>
<dbReference type="GO" id="GO:0000105">
    <property type="term" value="P:L-histidine biosynthetic process"/>
    <property type="evidence" value="ECO:0007669"/>
    <property type="project" value="UniProtKB-UniRule"/>
</dbReference>
<dbReference type="GO" id="GO:0000162">
    <property type="term" value="P:L-tryptophan biosynthetic process"/>
    <property type="evidence" value="ECO:0007669"/>
    <property type="project" value="TreeGrafter"/>
</dbReference>
<dbReference type="CDD" id="cd04732">
    <property type="entry name" value="HisA"/>
    <property type="match status" value="1"/>
</dbReference>
<dbReference type="FunFam" id="3.20.20.70:FF:000009">
    <property type="entry name" value="1-(5-phosphoribosyl)-5-[(5-phosphoribosylamino)methylideneamino] imidazole-4-carboxamide isomerase"/>
    <property type="match status" value="1"/>
</dbReference>
<dbReference type="Gene3D" id="3.20.20.70">
    <property type="entry name" value="Aldolase class I"/>
    <property type="match status" value="1"/>
</dbReference>
<dbReference type="HAMAP" id="MF_01014">
    <property type="entry name" value="HisA"/>
    <property type="match status" value="1"/>
</dbReference>
<dbReference type="InterPro" id="IPR013785">
    <property type="entry name" value="Aldolase_TIM"/>
</dbReference>
<dbReference type="InterPro" id="IPR006062">
    <property type="entry name" value="His_biosynth"/>
</dbReference>
<dbReference type="InterPro" id="IPR006063">
    <property type="entry name" value="HisA_bact_arch"/>
</dbReference>
<dbReference type="InterPro" id="IPR044524">
    <property type="entry name" value="Isoase_HisA-like"/>
</dbReference>
<dbReference type="InterPro" id="IPR023016">
    <property type="entry name" value="Isoase_HisA-like_bact"/>
</dbReference>
<dbReference type="InterPro" id="IPR011060">
    <property type="entry name" value="RibuloseP-bd_barrel"/>
</dbReference>
<dbReference type="NCBIfam" id="TIGR00007">
    <property type="entry name" value="1-(5-phosphoribosyl)-5-[(5-phosphoribosylamino)methylideneamino]imidazole-4-carboxamide isomerase"/>
    <property type="match status" value="1"/>
</dbReference>
<dbReference type="PANTHER" id="PTHR43090">
    <property type="entry name" value="1-(5-PHOSPHORIBOSYL)-5-[(5-PHOSPHORIBOSYLAMINO)METHYLIDENEAMINO] IMIDAZOLE-4-CARBOXAMIDE ISOMERASE"/>
    <property type="match status" value="1"/>
</dbReference>
<dbReference type="PANTHER" id="PTHR43090:SF2">
    <property type="entry name" value="1-(5-PHOSPHORIBOSYL)-5-[(5-PHOSPHORIBOSYLAMINO)METHYLIDENEAMINO] IMIDAZOLE-4-CARBOXAMIDE ISOMERASE"/>
    <property type="match status" value="1"/>
</dbReference>
<dbReference type="Pfam" id="PF00977">
    <property type="entry name" value="His_biosynth"/>
    <property type="match status" value="1"/>
</dbReference>
<dbReference type="SUPFAM" id="SSF51366">
    <property type="entry name" value="Ribulose-phoshate binding barrel"/>
    <property type="match status" value="1"/>
</dbReference>
<keyword id="KW-0028">Amino-acid biosynthesis</keyword>
<keyword id="KW-0963">Cytoplasm</keyword>
<keyword id="KW-0368">Histidine biosynthesis</keyword>
<keyword id="KW-0413">Isomerase</keyword>
<name>HIS4_BRAHW</name>
<protein>
    <recommendedName>
        <fullName evidence="1">1-(5-phosphoribosyl)-5-[(5-phosphoribosylamino)methylideneamino] imidazole-4-carboxamide isomerase</fullName>
        <ecNumber evidence="1">5.3.1.16</ecNumber>
    </recommendedName>
    <alternativeName>
        <fullName evidence="1">Phosphoribosylformimino-5-aminoimidazole carboxamide ribotide isomerase</fullName>
    </alternativeName>
</protein>
<reference key="1">
    <citation type="journal article" date="2009" name="PLoS ONE">
        <title>Genome sequence of the pathogenic intestinal spirochete Brachyspira hyodysenteriae reveals adaptations to its lifestyle in the porcine large intestine.</title>
        <authorList>
            <person name="Bellgard M.I."/>
            <person name="Wanchanthuek P."/>
            <person name="La T."/>
            <person name="Ryan K."/>
            <person name="Moolhuijzen P."/>
            <person name="Albertyn Z."/>
            <person name="Shaban B."/>
            <person name="Motro Y."/>
            <person name="Dunn D.S."/>
            <person name="Schibeci D."/>
            <person name="Hunter A."/>
            <person name="Barrero R."/>
            <person name="Phillips N.D."/>
            <person name="Hampson D.J."/>
        </authorList>
    </citation>
    <scope>NUCLEOTIDE SEQUENCE [LARGE SCALE GENOMIC DNA]</scope>
    <source>
        <strain>ATCC 49526 / WA1</strain>
    </source>
</reference>
<organism>
    <name type="scientific">Brachyspira hyodysenteriae (strain ATCC 49526 / WA1)</name>
    <dbReference type="NCBI Taxonomy" id="565034"/>
    <lineage>
        <taxon>Bacteria</taxon>
        <taxon>Pseudomonadati</taxon>
        <taxon>Spirochaetota</taxon>
        <taxon>Spirochaetia</taxon>
        <taxon>Brachyspirales</taxon>
        <taxon>Brachyspiraceae</taxon>
        <taxon>Brachyspira</taxon>
    </lineage>
</organism>
<feature type="chain" id="PRO_1000148955" description="1-(5-phosphoribosyl)-5-[(5-phosphoribosylamino)methylideneamino] imidazole-4-carboxamide isomerase">
    <location>
        <begin position="1"/>
        <end position="238"/>
    </location>
</feature>
<feature type="active site" description="Proton acceptor" evidence="1">
    <location>
        <position position="8"/>
    </location>
</feature>
<feature type="active site" description="Proton donor" evidence="1">
    <location>
        <position position="129"/>
    </location>
</feature>
<proteinExistence type="inferred from homology"/>
<comment type="catalytic activity">
    <reaction evidence="1">
        <text>1-(5-phospho-beta-D-ribosyl)-5-[(5-phospho-beta-D-ribosylamino)methylideneamino]imidazole-4-carboxamide = 5-[(5-phospho-1-deoxy-D-ribulos-1-ylimino)methylamino]-1-(5-phospho-beta-D-ribosyl)imidazole-4-carboxamide</text>
        <dbReference type="Rhea" id="RHEA:15469"/>
        <dbReference type="ChEBI" id="CHEBI:58435"/>
        <dbReference type="ChEBI" id="CHEBI:58525"/>
        <dbReference type="EC" id="5.3.1.16"/>
    </reaction>
</comment>
<comment type="pathway">
    <text evidence="1">Amino-acid biosynthesis; L-histidine biosynthesis; L-histidine from 5-phospho-alpha-D-ribose 1-diphosphate: step 4/9.</text>
</comment>
<comment type="subcellular location">
    <subcellularLocation>
        <location evidence="1">Cytoplasm</location>
    </subcellularLocation>
</comment>
<comment type="similarity">
    <text evidence="1">Belongs to the HisA/HisF family.</text>
</comment>